<keyword id="KW-0548">Nucleotidyltransferase</keyword>
<keyword id="KW-0694">RNA-binding</keyword>
<keyword id="KW-0698">rRNA processing</keyword>
<keyword id="KW-0808">Transferase</keyword>
<keyword id="KW-0819">tRNA processing</keyword>
<keyword id="KW-0820">tRNA-binding</keyword>
<organism>
    <name type="scientific">Sulfurihydrogenibium sp. (strain YO3AOP1)</name>
    <dbReference type="NCBI Taxonomy" id="436114"/>
    <lineage>
        <taxon>Bacteria</taxon>
        <taxon>Pseudomonadati</taxon>
        <taxon>Aquificota</taxon>
        <taxon>Aquificia</taxon>
        <taxon>Aquificales</taxon>
        <taxon>Hydrogenothermaceae</taxon>
        <taxon>Sulfurihydrogenibium</taxon>
    </lineage>
</organism>
<comment type="function">
    <text evidence="1">Phosphorolytic 3'-5' exoribonuclease that plays an important role in tRNA 3'-end maturation. Removes nucleotide residues following the 3'-CCA terminus of tRNAs; can also add nucleotides to the ends of RNA molecules by using nucleoside diphosphates as substrates, but this may not be physiologically important. Probably plays a role in initiation of 16S rRNA degradation (leading to ribosome degradation) during starvation.</text>
</comment>
<comment type="catalytic activity">
    <reaction evidence="1">
        <text>tRNA(n+1) + phosphate = tRNA(n) + a ribonucleoside 5'-diphosphate</text>
        <dbReference type="Rhea" id="RHEA:10628"/>
        <dbReference type="Rhea" id="RHEA-COMP:17343"/>
        <dbReference type="Rhea" id="RHEA-COMP:17344"/>
        <dbReference type="ChEBI" id="CHEBI:43474"/>
        <dbReference type="ChEBI" id="CHEBI:57930"/>
        <dbReference type="ChEBI" id="CHEBI:173114"/>
        <dbReference type="EC" id="2.7.7.56"/>
    </reaction>
</comment>
<comment type="subunit">
    <text evidence="1">Homohexameric ring arranged as a trimer of dimers.</text>
</comment>
<comment type="similarity">
    <text evidence="1">Belongs to the RNase PH family.</text>
</comment>
<gene>
    <name evidence="1" type="primary">rph</name>
    <name type="ordered locus">SYO3AOP1_0523</name>
</gene>
<accession>B2V890</accession>
<sequence>MRPDGRKPAQLRPIKIIRDFNIYAEGSVLIEFGNTKVIVTASVEDKVPPFLKGTGQGWITAEYSMIPRASETRSLREVVRGSPSGRTHEIQRLIGRSLRAAVDLKKLGEKTIWIDCDVIQADGGTRVASITGAFIAVADACIKLTKQNLVKANPLKDYVAAISVGKVRNEIVLDLNYTEDSNAQVDMNLVMTGKGEFVEIGATGEENTFSQEDFNKMLEYGKSGIERLIKIQKEFIEGIPSIGHWERKNIKEFVYKE</sequence>
<feature type="chain" id="PRO_1000129379" description="Ribonuclease PH">
    <location>
        <begin position="1"/>
        <end position="257"/>
    </location>
</feature>
<feature type="binding site" evidence="1">
    <location>
        <position position="86"/>
    </location>
    <ligand>
        <name>phosphate</name>
        <dbReference type="ChEBI" id="CHEBI:43474"/>
        <note>substrate</note>
    </ligand>
</feature>
<feature type="binding site" evidence="1">
    <location>
        <begin position="124"/>
        <end position="126"/>
    </location>
    <ligand>
        <name>phosphate</name>
        <dbReference type="ChEBI" id="CHEBI:43474"/>
        <note>substrate</note>
    </ligand>
</feature>
<protein>
    <recommendedName>
        <fullName evidence="1">Ribonuclease PH</fullName>
        <shortName evidence="1">RNase PH</shortName>
        <ecNumber evidence="1">2.7.7.56</ecNumber>
    </recommendedName>
    <alternativeName>
        <fullName evidence="1">tRNA nucleotidyltransferase</fullName>
    </alternativeName>
</protein>
<dbReference type="EC" id="2.7.7.56" evidence="1"/>
<dbReference type="EMBL" id="CP001080">
    <property type="protein sequence ID" value="ACD66163.1"/>
    <property type="molecule type" value="Genomic_DNA"/>
</dbReference>
<dbReference type="RefSeq" id="WP_012459244.1">
    <property type="nucleotide sequence ID" value="NC_010730.1"/>
</dbReference>
<dbReference type="SMR" id="B2V890"/>
<dbReference type="STRING" id="436114.SYO3AOP1_0523"/>
<dbReference type="KEGG" id="sul:SYO3AOP1_0523"/>
<dbReference type="eggNOG" id="COG0689">
    <property type="taxonomic scope" value="Bacteria"/>
</dbReference>
<dbReference type="HOGENOM" id="CLU_050858_0_0_0"/>
<dbReference type="GO" id="GO:0000175">
    <property type="term" value="F:3'-5'-RNA exonuclease activity"/>
    <property type="evidence" value="ECO:0007669"/>
    <property type="project" value="UniProtKB-UniRule"/>
</dbReference>
<dbReference type="GO" id="GO:0000049">
    <property type="term" value="F:tRNA binding"/>
    <property type="evidence" value="ECO:0007669"/>
    <property type="project" value="UniProtKB-UniRule"/>
</dbReference>
<dbReference type="GO" id="GO:0009022">
    <property type="term" value="F:tRNA nucleotidyltransferase activity"/>
    <property type="evidence" value="ECO:0007669"/>
    <property type="project" value="UniProtKB-UniRule"/>
</dbReference>
<dbReference type="GO" id="GO:0016075">
    <property type="term" value="P:rRNA catabolic process"/>
    <property type="evidence" value="ECO:0007669"/>
    <property type="project" value="UniProtKB-UniRule"/>
</dbReference>
<dbReference type="GO" id="GO:0006364">
    <property type="term" value="P:rRNA processing"/>
    <property type="evidence" value="ECO:0007669"/>
    <property type="project" value="UniProtKB-KW"/>
</dbReference>
<dbReference type="GO" id="GO:0008033">
    <property type="term" value="P:tRNA processing"/>
    <property type="evidence" value="ECO:0007669"/>
    <property type="project" value="UniProtKB-UniRule"/>
</dbReference>
<dbReference type="CDD" id="cd11362">
    <property type="entry name" value="RNase_PH_bact"/>
    <property type="match status" value="1"/>
</dbReference>
<dbReference type="FunFam" id="3.30.230.70:FF:000003">
    <property type="entry name" value="Ribonuclease PH"/>
    <property type="match status" value="1"/>
</dbReference>
<dbReference type="Gene3D" id="3.30.230.70">
    <property type="entry name" value="GHMP Kinase, N-terminal domain"/>
    <property type="match status" value="1"/>
</dbReference>
<dbReference type="HAMAP" id="MF_00564">
    <property type="entry name" value="RNase_PH"/>
    <property type="match status" value="1"/>
</dbReference>
<dbReference type="InterPro" id="IPR001247">
    <property type="entry name" value="ExoRNase_PH_dom1"/>
</dbReference>
<dbReference type="InterPro" id="IPR015847">
    <property type="entry name" value="ExoRNase_PH_dom2"/>
</dbReference>
<dbReference type="InterPro" id="IPR036345">
    <property type="entry name" value="ExoRNase_PH_dom2_sf"/>
</dbReference>
<dbReference type="InterPro" id="IPR027408">
    <property type="entry name" value="PNPase/RNase_PH_dom_sf"/>
</dbReference>
<dbReference type="InterPro" id="IPR020568">
    <property type="entry name" value="Ribosomal_Su5_D2-typ_SF"/>
</dbReference>
<dbReference type="InterPro" id="IPR050080">
    <property type="entry name" value="RNase_PH"/>
</dbReference>
<dbReference type="InterPro" id="IPR002381">
    <property type="entry name" value="RNase_PH_bac-type"/>
</dbReference>
<dbReference type="InterPro" id="IPR018336">
    <property type="entry name" value="RNase_PH_CS"/>
</dbReference>
<dbReference type="NCBIfam" id="TIGR01966">
    <property type="entry name" value="RNasePH"/>
    <property type="match status" value="1"/>
</dbReference>
<dbReference type="PANTHER" id="PTHR11953">
    <property type="entry name" value="EXOSOME COMPLEX COMPONENT"/>
    <property type="match status" value="1"/>
</dbReference>
<dbReference type="PANTHER" id="PTHR11953:SF0">
    <property type="entry name" value="EXOSOME COMPLEX COMPONENT RRP41"/>
    <property type="match status" value="1"/>
</dbReference>
<dbReference type="Pfam" id="PF01138">
    <property type="entry name" value="RNase_PH"/>
    <property type="match status" value="1"/>
</dbReference>
<dbReference type="Pfam" id="PF03725">
    <property type="entry name" value="RNase_PH_C"/>
    <property type="match status" value="1"/>
</dbReference>
<dbReference type="SUPFAM" id="SSF55666">
    <property type="entry name" value="Ribonuclease PH domain 2-like"/>
    <property type="match status" value="1"/>
</dbReference>
<dbReference type="SUPFAM" id="SSF54211">
    <property type="entry name" value="Ribosomal protein S5 domain 2-like"/>
    <property type="match status" value="1"/>
</dbReference>
<dbReference type="PROSITE" id="PS01277">
    <property type="entry name" value="RIBONUCLEASE_PH"/>
    <property type="match status" value="1"/>
</dbReference>
<evidence type="ECO:0000255" key="1">
    <source>
        <dbReference type="HAMAP-Rule" id="MF_00564"/>
    </source>
</evidence>
<proteinExistence type="inferred from homology"/>
<name>RNPH_SULSY</name>
<reference key="1">
    <citation type="journal article" date="2009" name="J. Bacteriol.">
        <title>Complete and draft genome sequences of six members of the Aquificales.</title>
        <authorList>
            <person name="Reysenbach A.-L."/>
            <person name="Hamamura N."/>
            <person name="Podar M."/>
            <person name="Griffiths E."/>
            <person name="Ferreira S."/>
            <person name="Hochstein R."/>
            <person name="Heidelberg J."/>
            <person name="Johnson J."/>
            <person name="Mead D."/>
            <person name="Pohorille A."/>
            <person name="Sarmiento M."/>
            <person name="Schweighofer K."/>
            <person name="Seshadri R."/>
            <person name="Voytek M.A."/>
        </authorList>
    </citation>
    <scope>NUCLEOTIDE SEQUENCE [LARGE SCALE GENOMIC DNA]</scope>
    <source>
        <strain>YO3AOP1</strain>
    </source>
</reference>